<organism>
    <name type="scientific">Acinetobacter baumannii (strain AB307-0294)</name>
    <dbReference type="NCBI Taxonomy" id="557600"/>
    <lineage>
        <taxon>Bacteria</taxon>
        <taxon>Pseudomonadati</taxon>
        <taxon>Pseudomonadota</taxon>
        <taxon>Gammaproteobacteria</taxon>
        <taxon>Moraxellales</taxon>
        <taxon>Moraxellaceae</taxon>
        <taxon>Acinetobacter</taxon>
        <taxon>Acinetobacter calcoaceticus/baumannii complex</taxon>
    </lineage>
</organism>
<dbReference type="EMBL" id="CP001172">
    <property type="protein sequence ID" value="ACJ59354.1"/>
    <property type="molecule type" value="Genomic_DNA"/>
</dbReference>
<dbReference type="RefSeq" id="WP_000201632.1">
    <property type="nucleotide sequence ID" value="NZ_CP001172.1"/>
</dbReference>
<dbReference type="SMR" id="B7GXH9"/>
<dbReference type="GeneID" id="92895005"/>
<dbReference type="HOGENOM" id="CLU_095424_4_1_6"/>
<dbReference type="Proteomes" id="UP000006924">
    <property type="component" value="Chromosome"/>
</dbReference>
<dbReference type="GO" id="GO:0022625">
    <property type="term" value="C:cytosolic large ribosomal subunit"/>
    <property type="evidence" value="ECO:0007669"/>
    <property type="project" value="TreeGrafter"/>
</dbReference>
<dbReference type="GO" id="GO:0003735">
    <property type="term" value="F:structural constituent of ribosome"/>
    <property type="evidence" value="ECO:0007669"/>
    <property type="project" value="InterPro"/>
</dbReference>
<dbReference type="GO" id="GO:0006412">
    <property type="term" value="P:translation"/>
    <property type="evidence" value="ECO:0007669"/>
    <property type="project" value="UniProtKB-UniRule"/>
</dbReference>
<dbReference type="FunFam" id="2.40.50.100:FF:000001">
    <property type="entry name" value="50S ribosomal protein L27"/>
    <property type="match status" value="1"/>
</dbReference>
<dbReference type="Gene3D" id="2.40.50.100">
    <property type="match status" value="1"/>
</dbReference>
<dbReference type="HAMAP" id="MF_00539">
    <property type="entry name" value="Ribosomal_bL27"/>
    <property type="match status" value="1"/>
</dbReference>
<dbReference type="InterPro" id="IPR001684">
    <property type="entry name" value="Ribosomal_bL27"/>
</dbReference>
<dbReference type="InterPro" id="IPR018261">
    <property type="entry name" value="Ribosomal_bL27_CS"/>
</dbReference>
<dbReference type="NCBIfam" id="TIGR00062">
    <property type="entry name" value="L27"/>
    <property type="match status" value="1"/>
</dbReference>
<dbReference type="PANTHER" id="PTHR15893:SF0">
    <property type="entry name" value="LARGE RIBOSOMAL SUBUNIT PROTEIN BL27M"/>
    <property type="match status" value="1"/>
</dbReference>
<dbReference type="PANTHER" id="PTHR15893">
    <property type="entry name" value="RIBOSOMAL PROTEIN L27"/>
    <property type="match status" value="1"/>
</dbReference>
<dbReference type="Pfam" id="PF01016">
    <property type="entry name" value="Ribosomal_L27"/>
    <property type="match status" value="1"/>
</dbReference>
<dbReference type="PRINTS" id="PR00063">
    <property type="entry name" value="RIBOSOMALL27"/>
</dbReference>
<dbReference type="SUPFAM" id="SSF110324">
    <property type="entry name" value="Ribosomal L27 protein-like"/>
    <property type="match status" value="1"/>
</dbReference>
<dbReference type="PROSITE" id="PS00831">
    <property type="entry name" value="RIBOSOMAL_L27"/>
    <property type="match status" value="1"/>
</dbReference>
<evidence type="ECO:0000255" key="1">
    <source>
        <dbReference type="HAMAP-Rule" id="MF_00539"/>
    </source>
</evidence>
<evidence type="ECO:0000256" key="2">
    <source>
        <dbReference type="SAM" id="MobiDB-lite"/>
    </source>
</evidence>
<evidence type="ECO:0000305" key="3"/>
<comment type="similarity">
    <text evidence="1">Belongs to the bacterial ribosomal protein bL27 family.</text>
</comment>
<name>RL27_ACIB3</name>
<accession>B7GXH9</accession>
<reference key="1">
    <citation type="journal article" date="2008" name="J. Bacteriol.">
        <title>Comparative genome sequence analysis of multidrug-resistant Acinetobacter baumannii.</title>
        <authorList>
            <person name="Adams M.D."/>
            <person name="Goglin K."/>
            <person name="Molyneaux N."/>
            <person name="Hujer K.M."/>
            <person name="Lavender H."/>
            <person name="Jamison J.J."/>
            <person name="MacDonald I.J."/>
            <person name="Martin K.M."/>
            <person name="Russo T."/>
            <person name="Campagnari A.A."/>
            <person name="Hujer A.M."/>
            <person name="Bonomo R.A."/>
            <person name="Gill S.R."/>
        </authorList>
    </citation>
    <scope>NUCLEOTIDE SEQUENCE [LARGE SCALE GENOMIC DNA]</scope>
    <source>
        <strain>AB307-0294</strain>
    </source>
</reference>
<sequence length="85" mass="9056">MATKKAGGSTKNGRDSNPKMLGVKVYGGQTVTAGNIIVRQRGTEFHAGANVGMGRDHTLFATADGVVKFEVKGQFGRRYVKVETV</sequence>
<gene>
    <name evidence="1" type="primary">rpmA</name>
    <name type="ordered locus">ABBFA_000738</name>
</gene>
<keyword id="KW-0687">Ribonucleoprotein</keyword>
<keyword id="KW-0689">Ribosomal protein</keyword>
<proteinExistence type="inferred from homology"/>
<feature type="chain" id="PRO_1000128675" description="Large ribosomal subunit protein bL27">
    <location>
        <begin position="1"/>
        <end position="85"/>
    </location>
</feature>
<feature type="region of interest" description="Disordered" evidence="2">
    <location>
        <begin position="1"/>
        <end position="20"/>
    </location>
</feature>
<protein>
    <recommendedName>
        <fullName evidence="1">Large ribosomal subunit protein bL27</fullName>
    </recommendedName>
    <alternativeName>
        <fullName evidence="3">50S ribosomal protein L27</fullName>
    </alternativeName>
</protein>